<organism>
    <name type="scientific">Wigglesworthia glossinidia brevipalpis</name>
    <dbReference type="NCBI Taxonomy" id="36870"/>
    <lineage>
        <taxon>Bacteria</taxon>
        <taxon>Pseudomonadati</taxon>
        <taxon>Pseudomonadota</taxon>
        <taxon>Gammaproteobacteria</taxon>
        <taxon>Enterobacterales</taxon>
        <taxon>Erwiniaceae</taxon>
        <taxon>Wigglesworthia</taxon>
    </lineage>
</organism>
<feature type="chain" id="PRO_0000108747" description="Ribosomal RNA small subunit methyltransferase H">
    <location>
        <begin position="1"/>
        <end position="309"/>
    </location>
</feature>
<feature type="binding site" evidence="1">
    <location>
        <begin position="30"/>
        <end position="32"/>
    </location>
    <ligand>
        <name>S-adenosyl-L-methionine</name>
        <dbReference type="ChEBI" id="CHEBI:59789"/>
    </ligand>
</feature>
<feature type="binding site" evidence="1">
    <location>
        <position position="50"/>
    </location>
    <ligand>
        <name>S-adenosyl-L-methionine</name>
        <dbReference type="ChEBI" id="CHEBI:59789"/>
    </ligand>
</feature>
<feature type="binding site" evidence="1">
    <location>
        <position position="74"/>
    </location>
    <ligand>
        <name>S-adenosyl-L-methionine</name>
        <dbReference type="ChEBI" id="CHEBI:59789"/>
    </ligand>
</feature>
<feature type="binding site" evidence="1">
    <location>
        <position position="96"/>
    </location>
    <ligand>
        <name>S-adenosyl-L-methionine</name>
        <dbReference type="ChEBI" id="CHEBI:59789"/>
    </ligand>
</feature>
<feature type="binding site" evidence="1">
    <location>
        <position position="103"/>
    </location>
    <ligand>
        <name>S-adenosyl-L-methionine</name>
        <dbReference type="ChEBI" id="CHEBI:59789"/>
    </ligand>
</feature>
<sequence>MHIPVMLNEVIKSIKIIPNGTYIDATFGCGGHSRCILSKLNEKGKLIVIDRDPKSIEFACSIKDRRLIPIHGNFSKILKYSIKYKIFGKVQGILFDLGLSFSQIKDSNRGFSFMHDGPLDMRMNNLHGISAKEWINNANIKDISFVIKEFGEEKFYKKISNVICKYRKIKNINTTKELVNLINKACGYFYKKKHPARRSFQAIRIYINNELQELKLALNDIIKIISPKGRIVFISFHSLEDRIIKKFIINNSRKKIYPYKLPILESKIKNDNIYKLKYFKKIQPSKKEILYNKKSRSAILRFAEKLKYD</sequence>
<proteinExistence type="inferred from homology"/>
<comment type="function">
    <text evidence="1">Specifically methylates the N4 position of cytidine in position 1402 (C1402) of 16S rRNA.</text>
</comment>
<comment type="catalytic activity">
    <reaction evidence="1">
        <text>cytidine(1402) in 16S rRNA + S-adenosyl-L-methionine = N(4)-methylcytidine(1402) in 16S rRNA + S-adenosyl-L-homocysteine + H(+)</text>
        <dbReference type="Rhea" id="RHEA:42928"/>
        <dbReference type="Rhea" id="RHEA-COMP:10286"/>
        <dbReference type="Rhea" id="RHEA-COMP:10287"/>
        <dbReference type="ChEBI" id="CHEBI:15378"/>
        <dbReference type="ChEBI" id="CHEBI:57856"/>
        <dbReference type="ChEBI" id="CHEBI:59789"/>
        <dbReference type="ChEBI" id="CHEBI:74506"/>
        <dbReference type="ChEBI" id="CHEBI:82748"/>
        <dbReference type="EC" id="2.1.1.199"/>
    </reaction>
</comment>
<comment type="subcellular location">
    <subcellularLocation>
        <location evidence="1">Cytoplasm</location>
    </subcellularLocation>
</comment>
<comment type="similarity">
    <text evidence="1">Belongs to the methyltransferase superfamily. RsmH family.</text>
</comment>
<gene>
    <name evidence="1" type="primary">rsmH</name>
    <name type="synonym">mraW</name>
    <name type="ordered locus">WIGBR2140</name>
</gene>
<keyword id="KW-0963">Cytoplasm</keyword>
<keyword id="KW-0489">Methyltransferase</keyword>
<keyword id="KW-1185">Reference proteome</keyword>
<keyword id="KW-0698">rRNA processing</keyword>
<keyword id="KW-0949">S-adenosyl-L-methionine</keyword>
<keyword id="KW-0808">Transferase</keyword>
<accession>Q8D2Y8</accession>
<name>RSMH_WIGBR</name>
<protein>
    <recommendedName>
        <fullName evidence="1">Ribosomal RNA small subunit methyltransferase H</fullName>
        <ecNumber evidence="1">2.1.1.199</ecNumber>
    </recommendedName>
    <alternativeName>
        <fullName evidence="1">16S rRNA m(4)C1402 methyltransferase</fullName>
    </alternativeName>
    <alternativeName>
        <fullName evidence="1">rRNA (cytosine-N(4)-)-methyltransferase RsmH</fullName>
    </alternativeName>
</protein>
<evidence type="ECO:0000255" key="1">
    <source>
        <dbReference type="HAMAP-Rule" id="MF_01007"/>
    </source>
</evidence>
<reference key="1">
    <citation type="journal article" date="2002" name="Nat. Genet.">
        <title>Genome sequence of the endocellular obligate symbiont of tsetse flies, Wigglesworthia glossinidia.</title>
        <authorList>
            <person name="Akman L."/>
            <person name="Yamashita A."/>
            <person name="Watanabe H."/>
            <person name="Oshima K."/>
            <person name="Shiba T."/>
            <person name="Hattori M."/>
            <person name="Aksoy S."/>
        </authorList>
    </citation>
    <scope>NUCLEOTIDE SEQUENCE [LARGE SCALE GENOMIC DNA]</scope>
</reference>
<dbReference type="EC" id="2.1.1.199" evidence="1"/>
<dbReference type="EMBL" id="BA000021">
    <property type="protein sequence ID" value="BAC24360.1"/>
    <property type="molecule type" value="Genomic_DNA"/>
</dbReference>
<dbReference type="SMR" id="Q8D2Y8"/>
<dbReference type="STRING" id="36870.gene:10368702"/>
<dbReference type="KEGG" id="wbr:yabC"/>
<dbReference type="eggNOG" id="COG0275">
    <property type="taxonomic scope" value="Bacteria"/>
</dbReference>
<dbReference type="HOGENOM" id="CLU_038422_2_0_6"/>
<dbReference type="OrthoDB" id="9806637at2"/>
<dbReference type="Proteomes" id="UP000000562">
    <property type="component" value="Chromosome"/>
</dbReference>
<dbReference type="GO" id="GO:0005737">
    <property type="term" value="C:cytoplasm"/>
    <property type="evidence" value="ECO:0007669"/>
    <property type="project" value="UniProtKB-SubCell"/>
</dbReference>
<dbReference type="GO" id="GO:0071424">
    <property type="term" value="F:rRNA (cytosine-N4-)-methyltransferase activity"/>
    <property type="evidence" value="ECO:0007669"/>
    <property type="project" value="UniProtKB-UniRule"/>
</dbReference>
<dbReference type="GO" id="GO:0070475">
    <property type="term" value="P:rRNA base methylation"/>
    <property type="evidence" value="ECO:0007669"/>
    <property type="project" value="UniProtKB-UniRule"/>
</dbReference>
<dbReference type="Gene3D" id="1.10.150.170">
    <property type="entry name" value="Putative methyltransferase TM0872, insert domain"/>
    <property type="match status" value="1"/>
</dbReference>
<dbReference type="Gene3D" id="3.40.50.150">
    <property type="entry name" value="Vaccinia Virus protein VP39"/>
    <property type="match status" value="1"/>
</dbReference>
<dbReference type="HAMAP" id="MF_01007">
    <property type="entry name" value="16SrRNA_methyltr_H"/>
    <property type="match status" value="1"/>
</dbReference>
<dbReference type="InterPro" id="IPR002903">
    <property type="entry name" value="RsmH"/>
</dbReference>
<dbReference type="InterPro" id="IPR023397">
    <property type="entry name" value="SAM-dep_MeTrfase_MraW_recog"/>
</dbReference>
<dbReference type="InterPro" id="IPR029063">
    <property type="entry name" value="SAM-dependent_MTases_sf"/>
</dbReference>
<dbReference type="NCBIfam" id="TIGR00006">
    <property type="entry name" value="16S rRNA (cytosine(1402)-N(4))-methyltransferase RsmH"/>
    <property type="match status" value="1"/>
</dbReference>
<dbReference type="PANTHER" id="PTHR11265:SF0">
    <property type="entry name" value="12S RRNA N4-METHYLCYTIDINE METHYLTRANSFERASE"/>
    <property type="match status" value="1"/>
</dbReference>
<dbReference type="PANTHER" id="PTHR11265">
    <property type="entry name" value="S-ADENOSYL-METHYLTRANSFERASE MRAW"/>
    <property type="match status" value="1"/>
</dbReference>
<dbReference type="Pfam" id="PF01795">
    <property type="entry name" value="Methyltransf_5"/>
    <property type="match status" value="1"/>
</dbReference>
<dbReference type="PIRSF" id="PIRSF004486">
    <property type="entry name" value="MraW"/>
    <property type="match status" value="1"/>
</dbReference>
<dbReference type="SUPFAM" id="SSF81799">
    <property type="entry name" value="Putative methyltransferase TM0872, insert domain"/>
    <property type="match status" value="1"/>
</dbReference>
<dbReference type="SUPFAM" id="SSF53335">
    <property type="entry name" value="S-adenosyl-L-methionine-dependent methyltransferases"/>
    <property type="match status" value="1"/>
</dbReference>